<sequence length="137" mass="15416">MLQPKRTKFRKQMTGHNRGLALRGSKVSFGEFALKSVARGRLTARQIESARRALTRHVKRGGKIWIRVFPDKPISKKPLEVRMGKGKGNVEYWVAQIQPGKVLYEIEGVSEELAREAFALAAAKLPLATSFVKRTVM</sequence>
<gene>
    <name evidence="1" type="primary">rplP</name>
    <name type="ordered locus">PFL_5575</name>
</gene>
<comment type="function">
    <text evidence="1">Binds 23S rRNA and is also seen to make contacts with the A and possibly P site tRNAs.</text>
</comment>
<comment type="subunit">
    <text evidence="1">Part of the 50S ribosomal subunit.</text>
</comment>
<comment type="similarity">
    <text evidence="1">Belongs to the universal ribosomal protein uL16 family.</text>
</comment>
<accession>Q4K540</accession>
<protein>
    <recommendedName>
        <fullName evidence="1">Large ribosomal subunit protein uL16</fullName>
    </recommendedName>
    <alternativeName>
        <fullName evidence="2">50S ribosomal protein L16</fullName>
    </alternativeName>
</protein>
<feature type="chain" id="PRO_0000062174" description="Large ribosomal subunit protein uL16">
    <location>
        <begin position="1"/>
        <end position="137"/>
    </location>
</feature>
<proteinExistence type="inferred from homology"/>
<name>RL16_PSEF5</name>
<keyword id="KW-0687">Ribonucleoprotein</keyword>
<keyword id="KW-0689">Ribosomal protein</keyword>
<keyword id="KW-0694">RNA-binding</keyword>
<keyword id="KW-0699">rRNA-binding</keyword>
<keyword id="KW-0820">tRNA-binding</keyword>
<evidence type="ECO:0000255" key="1">
    <source>
        <dbReference type="HAMAP-Rule" id="MF_01342"/>
    </source>
</evidence>
<evidence type="ECO:0000305" key="2"/>
<dbReference type="EMBL" id="CP000076">
    <property type="protein sequence ID" value="AAY94780.1"/>
    <property type="molecule type" value="Genomic_DNA"/>
</dbReference>
<dbReference type="RefSeq" id="WP_003228729.1">
    <property type="nucleotide sequence ID" value="NC_004129.6"/>
</dbReference>
<dbReference type="SMR" id="Q4K540"/>
<dbReference type="STRING" id="220664.PFL_5575"/>
<dbReference type="GeneID" id="93491407"/>
<dbReference type="KEGG" id="pfl:PFL_5575"/>
<dbReference type="eggNOG" id="COG0197">
    <property type="taxonomic scope" value="Bacteria"/>
</dbReference>
<dbReference type="HOGENOM" id="CLU_078858_2_1_6"/>
<dbReference type="Proteomes" id="UP000008540">
    <property type="component" value="Chromosome"/>
</dbReference>
<dbReference type="GO" id="GO:0022625">
    <property type="term" value="C:cytosolic large ribosomal subunit"/>
    <property type="evidence" value="ECO:0007669"/>
    <property type="project" value="TreeGrafter"/>
</dbReference>
<dbReference type="GO" id="GO:0019843">
    <property type="term" value="F:rRNA binding"/>
    <property type="evidence" value="ECO:0007669"/>
    <property type="project" value="UniProtKB-UniRule"/>
</dbReference>
<dbReference type="GO" id="GO:0003735">
    <property type="term" value="F:structural constituent of ribosome"/>
    <property type="evidence" value="ECO:0007669"/>
    <property type="project" value="InterPro"/>
</dbReference>
<dbReference type="GO" id="GO:0000049">
    <property type="term" value="F:tRNA binding"/>
    <property type="evidence" value="ECO:0007669"/>
    <property type="project" value="UniProtKB-KW"/>
</dbReference>
<dbReference type="GO" id="GO:0006412">
    <property type="term" value="P:translation"/>
    <property type="evidence" value="ECO:0007669"/>
    <property type="project" value="UniProtKB-UniRule"/>
</dbReference>
<dbReference type="CDD" id="cd01433">
    <property type="entry name" value="Ribosomal_L16_L10e"/>
    <property type="match status" value="1"/>
</dbReference>
<dbReference type="FunFam" id="3.90.1170.10:FF:000001">
    <property type="entry name" value="50S ribosomal protein L16"/>
    <property type="match status" value="1"/>
</dbReference>
<dbReference type="Gene3D" id="3.90.1170.10">
    <property type="entry name" value="Ribosomal protein L10e/L16"/>
    <property type="match status" value="1"/>
</dbReference>
<dbReference type="HAMAP" id="MF_01342">
    <property type="entry name" value="Ribosomal_uL16"/>
    <property type="match status" value="1"/>
</dbReference>
<dbReference type="InterPro" id="IPR047873">
    <property type="entry name" value="Ribosomal_uL16"/>
</dbReference>
<dbReference type="InterPro" id="IPR000114">
    <property type="entry name" value="Ribosomal_uL16_bact-type"/>
</dbReference>
<dbReference type="InterPro" id="IPR020798">
    <property type="entry name" value="Ribosomal_uL16_CS"/>
</dbReference>
<dbReference type="InterPro" id="IPR016180">
    <property type="entry name" value="Ribosomal_uL16_dom"/>
</dbReference>
<dbReference type="InterPro" id="IPR036920">
    <property type="entry name" value="Ribosomal_uL16_sf"/>
</dbReference>
<dbReference type="NCBIfam" id="TIGR01164">
    <property type="entry name" value="rplP_bact"/>
    <property type="match status" value="1"/>
</dbReference>
<dbReference type="PANTHER" id="PTHR12220">
    <property type="entry name" value="50S/60S RIBOSOMAL PROTEIN L16"/>
    <property type="match status" value="1"/>
</dbReference>
<dbReference type="PANTHER" id="PTHR12220:SF13">
    <property type="entry name" value="LARGE RIBOSOMAL SUBUNIT PROTEIN UL16M"/>
    <property type="match status" value="1"/>
</dbReference>
<dbReference type="Pfam" id="PF00252">
    <property type="entry name" value="Ribosomal_L16"/>
    <property type="match status" value="1"/>
</dbReference>
<dbReference type="PRINTS" id="PR00060">
    <property type="entry name" value="RIBOSOMALL16"/>
</dbReference>
<dbReference type="SUPFAM" id="SSF54686">
    <property type="entry name" value="Ribosomal protein L16p/L10e"/>
    <property type="match status" value="1"/>
</dbReference>
<dbReference type="PROSITE" id="PS00586">
    <property type="entry name" value="RIBOSOMAL_L16_1"/>
    <property type="match status" value="1"/>
</dbReference>
<dbReference type="PROSITE" id="PS00701">
    <property type="entry name" value="RIBOSOMAL_L16_2"/>
    <property type="match status" value="1"/>
</dbReference>
<reference key="1">
    <citation type="journal article" date="2005" name="Nat. Biotechnol.">
        <title>Complete genome sequence of the plant commensal Pseudomonas fluorescens Pf-5.</title>
        <authorList>
            <person name="Paulsen I.T."/>
            <person name="Press C.M."/>
            <person name="Ravel J."/>
            <person name="Kobayashi D.Y."/>
            <person name="Myers G.S.A."/>
            <person name="Mavrodi D.V."/>
            <person name="DeBoy R.T."/>
            <person name="Seshadri R."/>
            <person name="Ren Q."/>
            <person name="Madupu R."/>
            <person name="Dodson R.J."/>
            <person name="Durkin A.S."/>
            <person name="Brinkac L.M."/>
            <person name="Daugherty S.C."/>
            <person name="Sullivan S.A."/>
            <person name="Rosovitz M.J."/>
            <person name="Gwinn M.L."/>
            <person name="Zhou L."/>
            <person name="Schneider D.J."/>
            <person name="Cartinhour S.W."/>
            <person name="Nelson W.C."/>
            <person name="Weidman J."/>
            <person name="Watkins K."/>
            <person name="Tran K."/>
            <person name="Khouri H."/>
            <person name="Pierson E.A."/>
            <person name="Pierson L.S. III"/>
            <person name="Thomashow L.S."/>
            <person name="Loper J.E."/>
        </authorList>
    </citation>
    <scope>NUCLEOTIDE SEQUENCE [LARGE SCALE GENOMIC DNA]</scope>
    <source>
        <strain>ATCC BAA-477 / NRRL B-23932 / Pf-5</strain>
    </source>
</reference>
<organism>
    <name type="scientific">Pseudomonas fluorescens (strain ATCC BAA-477 / NRRL B-23932 / Pf-5)</name>
    <dbReference type="NCBI Taxonomy" id="220664"/>
    <lineage>
        <taxon>Bacteria</taxon>
        <taxon>Pseudomonadati</taxon>
        <taxon>Pseudomonadota</taxon>
        <taxon>Gammaproteobacteria</taxon>
        <taxon>Pseudomonadales</taxon>
        <taxon>Pseudomonadaceae</taxon>
        <taxon>Pseudomonas</taxon>
    </lineage>
</organism>